<dbReference type="EMBL" id="CU234118">
    <property type="protein sequence ID" value="CAL74144.1"/>
    <property type="molecule type" value="Genomic_DNA"/>
</dbReference>
<dbReference type="RefSeq" id="WP_011923436.1">
    <property type="nucleotide sequence ID" value="NC_009445.1"/>
</dbReference>
<dbReference type="SMR" id="A4YJR8"/>
<dbReference type="STRING" id="114615.BRADO0179"/>
<dbReference type="KEGG" id="bra:BRADO0179"/>
<dbReference type="eggNOG" id="COG0792">
    <property type="taxonomic scope" value="Bacteria"/>
</dbReference>
<dbReference type="HOGENOM" id="CLU_115353_0_2_5"/>
<dbReference type="OrthoDB" id="9812968at2"/>
<dbReference type="Proteomes" id="UP000001994">
    <property type="component" value="Chromosome"/>
</dbReference>
<dbReference type="GO" id="GO:0003676">
    <property type="term" value="F:nucleic acid binding"/>
    <property type="evidence" value="ECO:0007669"/>
    <property type="project" value="InterPro"/>
</dbReference>
<dbReference type="CDD" id="cd20736">
    <property type="entry name" value="PoNe_Nuclease"/>
    <property type="match status" value="1"/>
</dbReference>
<dbReference type="Gene3D" id="3.40.1350.10">
    <property type="match status" value="1"/>
</dbReference>
<dbReference type="HAMAP" id="MF_00048">
    <property type="entry name" value="UPF0102"/>
    <property type="match status" value="1"/>
</dbReference>
<dbReference type="InterPro" id="IPR011335">
    <property type="entry name" value="Restrct_endonuc-II-like"/>
</dbReference>
<dbReference type="InterPro" id="IPR011856">
    <property type="entry name" value="tRNA_endonuc-like_dom_sf"/>
</dbReference>
<dbReference type="InterPro" id="IPR003509">
    <property type="entry name" value="UPF0102_YraN-like"/>
</dbReference>
<dbReference type="NCBIfam" id="NF009151">
    <property type="entry name" value="PRK12497.1-5"/>
    <property type="match status" value="1"/>
</dbReference>
<dbReference type="NCBIfam" id="TIGR00252">
    <property type="entry name" value="YraN family protein"/>
    <property type="match status" value="1"/>
</dbReference>
<dbReference type="PANTHER" id="PTHR34039">
    <property type="entry name" value="UPF0102 PROTEIN YRAN"/>
    <property type="match status" value="1"/>
</dbReference>
<dbReference type="PANTHER" id="PTHR34039:SF1">
    <property type="entry name" value="UPF0102 PROTEIN YRAN"/>
    <property type="match status" value="1"/>
</dbReference>
<dbReference type="Pfam" id="PF02021">
    <property type="entry name" value="UPF0102"/>
    <property type="match status" value="1"/>
</dbReference>
<dbReference type="SUPFAM" id="SSF52980">
    <property type="entry name" value="Restriction endonuclease-like"/>
    <property type="match status" value="1"/>
</dbReference>
<evidence type="ECO:0000255" key="1">
    <source>
        <dbReference type="HAMAP-Rule" id="MF_00048"/>
    </source>
</evidence>
<evidence type="ECO:0000256" key="2">
    <source>
        <dbReference type="SAM" id="MobiDB-lite"/>
    </source>
</evidence>
<proteinExistence type="inferred from homology"/>
<comment type="similarity">
    <text evidence="1">Belongs to the UPF0102 family.</text>
</comment>
<reference key="1">
    <citation type="journal article" date="2007" name="Science">
        <title>Legumes symbioses: absence of nod genes in photosynthetic bradyrhizobia.</title>
        <authorList>
            <person name="Giraud E."/>
            <person name="Moulin L."/>
            <person name="Vallenet D."/>
            <person name="Barbe V."/>
            <person name="Cytryn E."/>
            <person name="Avarre J.-C."/>
            <person name="Jaubert M."/>
            <person name="Simon D."/>
            <person name="Cartieaux F."/>
            <person name="Prin Y."/>
            <person name="Bena G."/>
            <person name="Hannibal L."/>
            <person name="Fardoux J."/>
            <person name="Kojadinovic M."/>
            <person name="Vuillet L."/>
            <person name="Lajus A."/>
            <person name="Cruveiller S."/>
            <person name="Rouy Z."/>
            <person name="Mangenot S."/>
            <person name="Segurens B."/>
            <person name="Dossat C."/>
            <person name="Franck W.L."/>
            <person name="Chang W.-S."/>
            <person name="Saunders E."/>
            <person name="Bruce D."/>
            <person name="Richardson P."/>
            <person name="Normand P."/>
            <person name="Dreyfus B."/>
            <person name="Pignol D."/>
            <person name="Stacey G."/>
            <person name="Emerich D."/>
            <person name="Vermeglio A."/>
            <person name="Medigue C."/>
            <person name="Sadowsky M."/>
        </authorList>
    </citation>
    <scope>NUCLEOTIDE SEQUENCE [LARGE SCALE GENOMIC DNA]</scope>
    <source>
        <strain>ORS 278</strain>
    </source>
</reference>
<keyword id="KW-1185">Reference proteome</keyword>
<accession>A4YJR8</accession>
<organism>
    <name type="scientific">Bradyrhizobium sp. (strain ORS 278)</name>
    <dbReference type="NCBI Taxonomy" id="114615"/>
    <lineage>
        <taxon>Bacteria</taxon>
        <taxon>Pseudomonadati</taxon>
        <taxon>Pseudomonadota</taxon>
        <taxon>Alphaproteobacteria</taxon>
        <taxon>Hyphomicrobiales</taxon>
        <taxon>Nitrobacteraceae</taxon>
        <taxon>Bradyrhizobium</taxon>
    </lineage>
</organism>
<name>Y179_BRASO</name>
<sequence>MAETDRATDKPAGAPKPAKTASPERVAAFRTGLSAEARAAALLIAKGYRILAKRFRTPHGEIDLIARKRGLVAFVEVKARASLDDAAYAVTPRQQQRIIDAAQAWLMAHPDHAELELRFDAILVAPRSLPRHLMAAFDASP</sequence>
<protein>
    <recommendedName>
        <fullName evidence="1">UPF0102 protein BRADO0179</fullName>
    </recommendedName>
</protein>
<gene>
    <name type="ordered locus">BRADO0179</name>
</gene>
<feature type="chain" id="PRO_0000336136" description="UPF0102 protein BRADO0179">
    <location>
        <begin position="1"/>
        <end position="141"/>
    </location>
</feature>
<feature type="region of interest" description="Disordered" evidence="2">
    <location>
        <begin position="1"/>
        <end position="24"/>
    </location>
</feature>
<feature type="compositionally biased region" description="Low complexity" evidence="2">
    <location>
        <begin position="10"/>
        <end position="19"/>
    </location>
</feature>